<name>LFTR_BURPS</name>
<organism>
    <name type="scientific">Burkholderia pseudomallei (strain K96243)</name>
    <dbReference type="NCBI Taxonomy" id="272560"/>
    <lineage>
        <taxon>Bacteria</taxon>
        <taxon>Pseudomonadati</taxon>
        <taxon>Pseudomonadota</taxon>
        <taxon>Betaproteobacteria</taxon>
        <taxon>Burkholderiales</taxon>
        <taxon>Burkholderiaceae</taxon>
        <taxon>Burkholderia</taxon>
        <taxon>pseudomallei group</taxon>
    </lineage>
</organism>
<feature type="chain" id="PRO_0000258049" description="Leucyl/phenylalanyl-tRNA--protein transferase">
    <location>
        <begin position="1"/>
        <end position="255"/>
    </location>
</feature>
<dbReference type="EC" id="2.3.2.6" evidence="1"/>
<dbReference type="EMBL" id="BX571965">
    <property type="protein sequence ID" value="CAH35863.1"/>
    <property type="molecule type" value="Genomic_DNA"/>
</dbReference>
<dbReference type="RefSeq" id="WP_004521636.1">
    <property type="nucleotide sequence ID" value="NZ_CP009538.1"/>
</dbReference>
<dbReference type="RefSeq" id="YP_108463.1">
    <property type="nucleotide sequence ID" value="NC_006350.1"/>
</dbReference>
<dbReference type="SMR" id="Q63TV3"/>
<dbReference type="STRING" id="272560.BPSL1864"/>
<dbReference type="GeneID" id="93060131"/>
<dbReference type="KEGG" id="bps:BPSL1864"/>
<dbReference type="PATRIC" id="fig|272560.51.peg.3998"/>
<dbReference type="eggNOG" id="COG2360">
    <property type="taxonomic scope" value="Bacteria"/>
</dbReference>
<dbReference type="Proteomes" id="UP000000605">
    <property type="component" value="Chromosome 1"/>
</dbReference>
<dbReference type="GO" id="GO:0005737">
    <property type="term" value="C:cytoplasm"/>
    <property type="evidence" value="ECO:0007669"/>
    <property type="project" value="UniProtKB-SubCell"/>
</dbReference>
<dbReference type="GO" id="GO:0008914">
    <property type="term" value="F:leucyl-tRNA--protein transferase activity"/>
    <property type="evidence" value="ECO:0007669"/>
    <property type="project" value="UniProtKB-UniRule"/>
</dbReference>
<dbReference type="GO" id="GO:0030163">
    <property type="term" value="P:protein catabolic process"/>
    <property type="evidence" value="ECO:0007669"/>
    <property type="project" value="UniProtKB-UniRule"/>
</dbReference>
<dbReference type="Gene3D" id="3.40.630.70">
    <property type="entry name" value="Leucyl/phenylalanyl-tRNA-protein transferase, C-terminal domain"/>
    <property type="match status" value="1"/>
</dbReference>
<dbReference type="Gene3D" id="3.30.70.3550">
    <property type="entry name" value="Leucyl/phenylalanyl-tRNA-protein transferase, N-terminal domain"/>
    <property type="match status" value="1"/>
</dbReference>
<dbReference type="HAMAP" id="MF_00688">
    <property type="entry name" value="Leu_Phe_trans"/>
    <property type="match status" value="1"/>
</dbReference>
<dbReference type="InterPro" id="IPR016181">
    <property type="entry name" value="Acyl_CoA_acyltransferase"/>
</dbReference>
<dbReference type="InterPro" id="IPR004616">
    <property type="entry name" value="Leu/Phe-tRNA_Trfase"/>
</dbReference>
<dbReference type="InterPro" id="IPR042203">
    <property type="entry name" value="Leu/Phe-tRNA_Trfase_C"/>
</dbReference>
<dbReference type="InterPro" id="IPR042221">
    <property type="entry name" value="Leu/Phe-tRNA_Trfase_N"/>
</dbReference>
<dbReference type="NCBIfam" id="TIGR00667">
    <property type="entry name" value="aat"/>
    <property type="match status" value="1"/>
</dbReference>
<dbReference type="PANTHER" id="PTHR30098">
    <property type="entry name" value="LEUCYL/PHENYLALANYL-TRNA--PROTEIN TRANSFERASE"/>
    <property type="match status" value="1"/>
</dbReference>
<dbReference type="PANTHER" id="PTHR30098:SF2">
    <property type="entry name" value="LEUCYL_PHENYLALANYL-TRNA--PROTEIN TRANSFERASE"/>
    <property type="match status" value="1"/>
</dbReference>
<dbReference type="Pfam" id="PF03588">
    <property type="entry name" value="Leu_Phe_trans"/>
    <property type="match status" value="1"/>
</dbReference>
<dbReference type="SUPFAM" id="SSF55729">
    <property type="entry name" value="Acyl-CoA N-acyltransferases (Nat)"/>
    <property type="match status" value="1"/>
</dbReference>
<sequence length="255" mass="28205">MVPWLGPDDPFPSVERALGAASGAPGLLAASADLLPSRLIDAYRRGIFPWYSDGQPVLWWSPDPRMILVPAEFRISATFRKTLKRVLREPRWEIRVDCDFAGVMRACAQAPRRGQRGTWITAEIIDAYSSLHRAGDAHSIETWLDGRRVGGLYGVSFGRMFFGESMYAHASDASKIALAALVAHLREHRVEMIDCQQNTSHLASLGGREIARKTFVAHVRRAVAEPPIPWRFDKRVVAGLLGQAASATAADAFDR</sequence>
<proteinExistence type="inferred from homology"/>
<protein>
    <recommendedName>
        <fullName evidence="1">Leucyl/phenylalanyl-tRNA--protein transferase</fullName>
        <ecNumber evidence="1">2.3.2.6</ecNumber>
    </recommendedName>
    <alternativeName>
        <fullName evidence="1">L/F-transferase</fullName>
    </alternativeName>
    <alternativeName>
        <fullName evidence="1">Leucyltransferase</fullName>
    </alternativeName>
    <alternativeName>
        <fullName evidence="1">Phenyalanyltransferase</fullName>
    </alternativeName>
</protein>
<accession>Q63TV3</accession>
<reference key="1">
    <citation type="journal article" date="2004" name="Proc. Natl. Acad. Sci. U.S.A.">
        <title>Genomic plasticity of the causative agent of melioidosis, Burkholderia pseudomallei.</title>
        <authorList>
            <person name="Holden M.T.G."/>
            <person name="Titball R.W."/>
            <person name="Peacock S.J."/>
            <person name="Cerdeno-Tarraga A.-M."/>
            <person name="Atkins T."/>
            <person name="Crossman L.C."/>
            <person name="Pitt T."/>
            <person name="Churcher C."/>
            <person name="Mungall K.L."/>
            <person name="Bentley S.D."/>
            <person name="Sebaihia M."/>
            <person name="Thomson N.R."/>
            <person name="Bason N."/>
            <person name="Beacham I.R."/>
            <person name="Brooks K."/>
            <person name="Brown K.A."/>
            <person name="Brown N.F."/>
            <person name="Challis G.L."/>
            <person name="Cherevach I."/>
            <person name="Chillingworth T."/>
            <person name="Cronin A."/>
            <person name="Crossett B."/>
            <person name="Davis P."/>
            <person name="DeShazer D."/>
            <person name="Feltwell T."/>
            <person name="Fraser A."/>
            <person name="Hance Z."/>
            <person name="Hauser H."/>
            <person name="Holroyd S."/>
            <person name="Jagels K."/>
            <person name="Keith K.E."/>
            <person name="Maddison M."/>
            <person name="Moule S."/>
            <person name="Price C."/>
            <person name="Quail M.A."/>
            <person name="Rabbinowitsch E."/>
            <person name="Rutherford K."/>
            <person name="Sanders M."/>
            <person name="Simmonds M."/>
            <person name="Songsivilai S."/>
            <person name="Stevens K."/>
            <person name="Tumapa S."/>
            <person name="Vesaratchavest M."/>
            <person name="Whitehead S."/>
            <person name="Yeats C."/>
            <person name="Barrell B.G."/>
            <person name="Oyston P.C.F."/>
            <person name="Parkhill J."/>
        </authorList>
    </citation>
    <scope>NUCLEOTIDE SEQUENCE [LARGE SCALE GENOMIC DNA]</scope>
    <source>
        <strain>K96243</strain>
    </source>
</reference>
<gene>
    <name evidence="1" type="primary">aat</name>
    <name type="ordered locus">BPSL1864</name>
</gene>
<evidence type="ECO:0000255" key="1">
    <source>
        <dbReference type="HAMAP-Rule" id="MF_00688"/>
    </source>
</evidence>
<keyword id="KW-0012">Acyltransferase</keyword>
<keyword id="KW-0963">Cytoplasm</keyword>
<keyword id="KW-1185">Reference proteome</keyword>
<keyword id="KW-0808">Transferase</keyword>
<comment type="function">
    <text evidence="1">Functions in the N-end rule pathway of protein degradation where it conjugates Leu, Phe and, less efficiently, Met from aminoacyl-tRNAs to the N-termini of proteins containing an N-terminal arginine or lysine.</text>
</comment>
<comment type="catalytic activity">
    <reaction evidence="1">
        <text>N-terminal L-lysyl-[protein] + L-leucyl-tRNA(Leu) = N-terminal L-leucyl-L-lysyl-[protein] + tRNA(Leu) + H(+)</text>
        <dbReference type="Rhea" id="RHEA:12340"/>
        <dbReference type="Rhea" id="RHEA-COMP:9613"/>
        <dbReference type="Rhea" id="RHEA-COMP:9622"/>
        <dbReference type="Rhea" id="RHEA-COMP:12670"/>
        <dbReference type="Rhea" id="RHEA-COMP:12671"/>
        <dbReference type="ChEBI" id="CHEBI:15378"/>
        <dbReference type="ChEBI" id="CHEBI:65249"/>
        <dbReference type="ChEBI" id="CHEBI:78442"/>
        <dbReference type="ChEBI" id="CHEBI:78494"/>
        <dbReference type="ChEBI" id="CHEBI:133043"/>
        <dbReference type="EC" id="2.3.2.6"/>
    </reaction>
</comment>
<comment type="catalytic activity">
    <reaction evidence="1">
        <text>N-terminal L-arginyl-[protein] + L-leucyl-tRNA(Leu) = N-terminal L-leucyl-L-arginyl-[protein] + tRNA(Leu) + H(+)</text>
        <dbReference type="Rhea" id="RHEA:50416"/>
        <dbReference type="Rhea" id="RHEA-COMP:9613"/>
        <dbReference type="Rhea" id="RHEA-COMP:9622"/>
        <dbReference type="Rhea" id="RHEA-COMP:12672"/>
        <dbReference type="Rhea" id="RHEA-COMP:12673"/>
        <dbReference type="ChEBI" id="CHEBI:15378"/>
        <dbReference type="ChEBI" id="CHEBI:64719"/>
        <dbReference type="ChEBI" id="CHEBI:78442"/>
        <dbReference type="ChEBI" id="CHEBI:78494"/>
        <dbReference type="ChEBI" id="CHEBI:133044"/>
        <dbReference type="EC" id="2.3.2.6"/>
    </reaction>
</comment>
<comment type="catalytic activity">
    <reaction evidence="1">
        <text>L-phenylalanyl-tRNA(Phe) + an N-terminal L-alpha-aminoacyl-[protein] = an N-terminal L-phenylalanyl-L-alpha-aminoacyl-[protein] + tRNA(Phe)</text>
        <dbReference type="Rhea" id="RHEA:43632"/>
        <dbReference type="Rhea" id="RHEA-COMP:9668"/>
        <dbReference type="Rhea" id="RHEA-COMP:9699"/>
        <dbReference type="Rhea" id="RHEA-COMP:10636"/>
        <dbReference type="Rhea" id="RHEA-COMP:10637"/>
        <dbReference type="ChEBI" id="CHEBI:78442"/>
        <dbReference type="ChEBI" id="CHEBI:78531"/>
        <dbReference type="ChEBI" id="CHEBI:78597"/>
        <dbReference type="ChEBI" id="CHEBI:83561"/>
        <dbReference type="EC" id="2.3.2.6"/>
    </reaction>
</comment>
<comment type="subcellular location">
    <subcellularLocation>
        <location evidence="1">Cytoplasm</location>
    </subcellularLocation>
</comment>
<comment type="similarity">
    <text evidence="1">Belongs to the L/F-transferase family.</text>
</comment>